<reference key="1">
    <citation type="submission" date="2003-06" db="EMBL/GenBank/DDBJ databases">
        <title>The complete genome sequence of Haemophilus ducreyi.</title>
        <authorList>
            <person name="Munson R.S. Jr."/>
            <person name="Ray W.C."/>
            <person name="Mahairas G."/>
            <person name="Sabo P."/>
            <person name="Mungur R."/>
            <person name="Johnson L."/>
            <person name="Nguyen D."/>
            <person name="Wang J."/>
            <person name="Forst C."/>
            <person name="Hood L."/>
        </authorList>
    </citation>
    <scope>NUCLEOTIDE SEQUENCE [LARGE SCALE GENOMIC DNA]</scope>
    <source>
        <strain>35000HP / ATCC 700724</strain>
    </source>
</reference>
<organism>
    <name type="scientific">Haemophilus ducreyi (strain 35000HP / ATCC 700724)</name>
    <dbReference type="NCBI Taxonomy" id="233412"/>
    <lineage>
        <taxon>Bacteria</taxon>
        <taxon>Pseudomonadati</taxon>
        <taxon>Pseudomonadota</taxon>
        <taxon>Gammaproteobacteria</taxon>
        <taxon>Pasteurellales</taxon>
        <taxon>Pasteurellaceae</taxon>
        <taxon>Haemophilus</taxon>
    </lineage>
</organism>
<sequence length="257" mass="27682">MAKFNKDSVSGTLTVVVLLSLICSLIVASAAVLLKPTQDIQKQLDKQKNILQAAGLMHENTNVQETYAKFIEPKIVDLATGDYVEDVANFDAKAFAKDPATSVAIKPEDDKANIRMRAKYAEVYLVKDEMGQTTQVVLPMYGNGLWSMMYGFVAVQPDANTVNGITYYEQGETAGLGGEIANPNWQKSFVGKKLFNANNEVALTIGKGASADKEHGVDGLSGATLTSKGVDNSFKYWFGTNGFGPYLAKFKATAGAN</sequence>
<gene>
    <name evidence="1" type="primary">nqrC</name>
    <name type="ordered locus">HD_0381</name>
</gene>
<accession>Q7VNU7</accession>
<name>NQRC_HAEDU</name>
<dbReference type="EC" id="7.2.1.1" evidence="1"/>
<dbReference type="EMBL" id="AE017143">
    <property type="protein sequence ID" value="AAP95351.1"/>
    <property type="molecule type" value="Genomic_DNA"/>
</dbReference>
<dbReference type="RefSeq" id="WP_010944404.1">
    <property type="nucleotide sequence ID" value="NC_002940.2"/>
</dbReference>
<dbReference type="SMR" id="Q7VNU7"/>
<dbReference type="STRING" id="233412.HD_0381"/>
<dbReference type="DNASU" id="1490380"/>
<dbReference type="KEGG" id="hdu:HD_0381"/>
<dbReference type="eggNOG" id="COG2869">
    <property type="taxonomic scope" value="Bacteria"/>
</dbReference>
<dbReference type="HOGENOM" id="CLU_077882_0_1_6"/>
<dbReference type="OrthoDB" id="9786835at2"/>
<dbReference type="Proteomes" id="UP000001022">
    <property type="component" value="Chromosome"/>
</dbReference>
<dbReference type="GO" id="GO:0005886">
    <property type="term" value="C:plasma membrane"/>
    <property type="evidence" value="ECO:0007669"/>
    <property type="project" value="UniProtKB-SubCell"/>
</dbReference>
<dbReference type="GO" id="GO:0010181">
    <property type="term" value="F:FMN binding"/>
    <property type="evidence" value="ECO:0007669"/>
    <property type="project" value="UniProtKB-UniRule"/>
</dbReference>
<dbReference type="GO" id="GO:0016655">
    <property type="term" value="F:oxidoreductase activity, acting on NAD(P)H, quinone or similar compound as acceptor"/>
    <property type="evidence" value="ECO:0007669"/>
    <property type="project" value="UniProtKB-UniRule"/>
</dbReference>
<dbReference type="GO" id="GO:0006814">
    <property type="term" value="P:sodium ion transport"/>
    <property type="evidence" value="ECO:0007669"/>
    <property type="project" value="UniProtKB-UniRule"/>
</dbReference>
<dbReference type="HAMAP" id="MF_00427">
    <property type="entry name" value="NqrC"/>
    <property type="match status" value="1"/>
</dbReference>
<dbReference type="InterPro" id="IPR007329">
    <property type="entry name" value="FMN-bd"/>
</dbReference>
<dbReference type="InterPro" id="IPR010204">
    <property type="entry name" value="NqrC"/>
</dbReference>
<dbReference type="NCBIfam" id="TIGR01938">
    <property type="entry name" value="nqrC"/>
    <property type="match status" value="1"/>
</dbReference>
<dbReference type="NCBIfam" id="NF003746">
    <property type="entry name" value="PRK05346.1-1"/>
    <property type="match status" value="1"/>
</dbReference>
<dbReference type="NCBIfam" id="NF003749">
    <property type="entry name" value="PRK05346.1-5"/>
    <property type="match status" value="1"/>
</dbReference>
<dbReference type="PANTHER" id="PTHR37838">
    <property type="entry name" value="NA(+)-TRANSLOCATING NADH-QUINONE REDUCTASE SUBUNIT C"/>
    <property type="match status" value="1"/>
</dbReference>
<dbReference type="PANTHER" id="PTHR37838:SF1">
    <property type="entry name" value="NA(+)-TRANSLOCATING NADH-QUINONE REDUCTASE SUBUNIT C"/>
    <property type="match status" value="1"/>
</dbReference>
<dbReference type="Pfam" id="PF04205">
    <property type="entry name" value="FMN_bind"/>
    <property type="match status" value="1"/>
</dbReference>
<dbReference type="PIRSF" id="PIRSF009437">
    <property type="entry name" value="NQR-1_subunit_C"/>
    <property type="match status" value="1"/>
</dbReference>
<dbReference type="SMART" id="SM00900">
    <property type="entry name" value="FMN_bind"/>
    <property type="match status" value="1"/>
</dbReference>
<proteinExistence type="inferred from homology"/>
<feature type="chain" id="PRO_0000214215" description="Na(+)-translocating NADH-quinone reductase subunit C">
    <location>
        <begin position="1"/>
        <end position="257"/>
    </location>
</feature>
<feature type="transmembrane region" description="Helical" evidence="1">
    <location>
        <begin position="13"/>
        <end position="33"/>
    </location>
</feature>
<feature type="modified residue" description="FMN phosphoryl threonine" evidence="1">
    <location>
        <position position="224"/>
    </location>
</feature>
<keyword id="KW-0997">Cell inner membrane</keyword>
<keyword id="KW-1003">Cell membrane</keyword>
<keyword id="KW-0285">Flavoprotein</keyword>
<keyword id="KW-0288">FMN</keyword>
<keyword id="KW-0406">Ion transport</keyword>
<keyword id="KW-0472">Membrane</keyword>
<keyword id="KW-0520">NAD</keyword>
<keyword id="KW-0597">Phosphoprotein</keyword>
<keyword id="KW-1185">Reference proteome</keyword>
<keyword id="KW-0915">Sodium</keyword>
<keyword id="KW-0739">Sodium transport</keyword>
<keyword id="KW-1278">Translocase</keyword>
<keyword id="KW-0812">Transmembrane</keyword>
<keyword id="KW-1133">Transmembrane helix</keyword>
<keyword id="KW-0813">Transport</keyword>
<keyword id="KW-0830">Ubiquinone</keyword>
<protein>
    <recommendedName>
        <fullName evidence="1">Na(+)-translocating NADH-quinone reductase subunit C</fullName>
        <shortName evidence="1">Na(+)-NQR subunit C</shortName>
        <shortName evidence="1">Na(+)-translocating NQR subunit C</shortName>
        <ecNumber evidence="1">7.2.1.1</ecNumber>
    </recommendedName>
    <alternativeName>
        <fullName evidence="1">NQR complex subunit C</fullName>
    </alternativeName>
    <alternativeName>
        <fullName evidence="1">NQR-1 subunit C</fullName>
    </alternativeName>
</protein>
<comment type="function">
    <text evidence="1">NQR complex catalyzes the reduction of ubiquinone-1 to ubiquinol by two successive reactions, coupled with the transport of Na(+) ions from the cytoplasm to the periplasm. NqrA to NqrE are probably involved in the second step, the conversion of ubisemiquinone to ubiquinol.</text>
</comment>
<comment type="catalytic activity">
    <reaction evidence="1">
        <text>a ubiquinone + n Na(+)(in) + NADH + H(+) = a ubiquinol + n Na(+)(out) + NAD(+)</text>
        <dbReference type="Rhea" id="RHEA:47748"/>
        <dbReference type="Rhea" id="RHEA-COMP:9565"/>
        <dbReference type="Rhea" id="RHEA-COMP:9566"/>
        <dbReference type="ChEBI" id="CHEBI:15378"/>
        <dbReference type="ChEBI" id="CHEBI:16389"/>
        <dbReference type="ChEBI" id="CHEBI:17976"/>
        <dbReference type="ChEBI" id="CHEBI:29101"/>
        <dbReference type="ChEBI" id="CHEBI:57540"/>
        <dbReference type="ChEBI" id="CHEBI:57945"/>
        <dbReference type="EC" id="7.2.1.1"/>
    </reaction>
</comment>
<comment type="cofactor">
    <cofactor evidence="1">
        <name>FMN</name>
        <dbReference type="ChEBI" id="CHEBI:58210"/>
    </cofactor>
</comment>
<comment type="subunit">
    <text evidence="1">Composed of six subunits; NqrA, NqrB, NqrC, NqrD, NqrE and NqrF.</text>
</comment>
<comment type="subcellular location">
    <subcellularLocation>
        <location evidence="1">Cell inner membrane</location>
        <topology evidence="1">Single-pass membrane protein</topology>
    </subcellularLocation>
</comment>
<comment type="similarity">
    <text evidence="1">Belongs to the NqrC family.</text>
</comment>
<evidence type="ECO:0000255" key="1">
    <source>
        <dbReference type="HAMAP-Rule" id="MF_00427"/>
    </source>
</evidence>